<proteinExistence type="evidence at protein level"/>
<keyword id="KW-0176">Collagen</keyword>
<keyword id="KW-0193">Cuticle</keyword>
<keyword id="KW-1015">Disulfide bond</keyword>
<keyword id="KW-1185">Reference proteome</keyword>
<keyword id="KW-0677">Repeat</keyword>
<evidence type="ECO:0000256" key="1">
    <source>
        <dbReference type="SAM" id="MobiDB-lite"/>
    </source>
</evidence>
<evidence type="ECO:0000269" key="2">
    <source>
    </source>
</evidence>
<evidence type="ECO:0000269" key="3">
    <source>
    </source>
</evidence>
<evidence type="ECO:0000305" key="4"/>
<evidence type="ECO:0000305" key="5">
    <source>
    </source>
</evidence>
<reference key="1">
    <citation type="journal article" date="1990" name="Mol. Cell. Biol.">
        <title>The Caenorhabditis elegans rol-6 gene, which interacts with the sqt-1 collagen gene to determine organismal morphology, encodes a collagen.</title>
        <authorList>
            <person name="Kramer J.M."/>
            <person name="French R.P."/>
            <person name="Park E.-C."/>
            <person name="Johnson J.J."/>
        </authorList>
    </citation>
    <scope>NUCLEOTIDE SEQUENCE [GENOMIC DNA]</scope>
    <source>
        <strain>Bristol N2</strain>
    </source>
</reference>
<reference key="2">
    <citation type="journal article" date="1998" name="Science">
        <title>Genome sequence of the nematode C. elegans: a platform for investigating biology.</title>
        <authorList>
            <consortium name="The C. elegans sequencing consortium"/>
        </authorList>
    </citation>
    <scope>NUCLEOTIDE SEQUENCE [LARGE SCALE GENOMIC DNA]</scope>
    <source>
        <strain>Bristol N2</strain>
    </source>
</reference>
<reference key="3">
    <citation type="journal article" date="2011" name="FEBS Lett.">
        <title>A novel zinc-carboxypeptidase SURO-1 regulates cuticle formation and body morphogenesis in Caenorhabditis elegans.</title>
        <authorList>
            <person name="Kim T.H."/>
            <person name="Kim Y.J."/>
            <person name="Cho J.W."/>
            <person name="Shim J."/>
        </authorList>
    </citation>
    <scope>FUNCTION</scope>
    <scope>TISSUE SPECIFICITY</scope>
    <scope>MUTAGENESIS OF ARG-71</scope>
</reference>
<reference key="4">
    <citation type="journal article" date="2020" name="Genetics">
        <title>Cuticle Collagen Expression Is Regulated in Response to Environmental Stimuli by the GATA Transcription Factor ELT-3 in Caenorhabditis elegans.</title>
        <authorList>
            <person name="Mesbahi H."/>
            <person name="Pho K.B."/>
            <person name="Tench A.J."/>
            <person name="Leon Guerrero V.L."/>
            <person name="MacNeil L.T."/>
        </authorList>
    </citation>
    <scope>FUNCTION</scope>
    <scope>MUTAGENESIS OF ARG-71</scope>
</reference>
<gene>
    <name type="primary">rol-6</name>
    <name type="ORF">T01B7.7</name>
</gene>
<name>ROL6_CAEEL</name>
<protein>
    <recommendedName>
        <fullName>Cuticle collagen rol-6</fullName>
    </recommendedName>
    <alternativeName>
        <fullName>Protein roller-6</fullName>
    </alternativeName>
</protein>
<accession>P20784</accession>
<dbReference type="EMBL" id="M34451">
    <property type="protein sequence ID" value="AAA28143.1"/>
    <property type="molecule type" value="Genomic_DNA"/>
</dbReference>
<dbReference type="EMBL" id="Z66499">
    <property type="protein sequence ID" value="CAA91300.1"/>
    <property type="molecule type" value="Genomic_DNA"/>
</dbReference>
<dbReference type="PIR" id="A34705">
    <property type="entry name" value="A34705"/>
</dbReference>
<dbReference type="RefSeq" id="NP_495858.1">
    <property type="nucleotide sequence ID" value="NM_063457.4"/>
</dbReference>
<dbReference type="SMR" id="P20784"/>
<dbReference type="FunCoup" id="P20784">
    <property type="interactions" value="1290"/>
</dbReference>
<dbReference type="STRING" id="6239.T01B7.7.2"/>
<dbReference type="PaxDb" id="6239-T01B7.7"/>
<dbReference type="PeptideAtlas" id="P20784"/>
<dbReference type="EnsemblMetazoa" id="T01B7.7.1">
    <property type="protein sequence ID" value="T01B7.7.1"/>
    <property type="gene ID" value="WBGene00004397"/>
</dbReference>
<dbReference type="GeneID" id="174397"/>
<dbReference type="KEGG" id="cel:CELE_T01B7.7"/>
<dbReference type="UCSC" id="T01B7.7">
    <property type="organism name" value="c. elegans"/>
</dbReference>
<dbReference type="AGR" id="WB:WBGene00004397"/>
<dbReference type="CTD" id="174397"/>
<dbReference type="WormBase" id="T01B7.7">
    <property type="protein sequence ID" value="CE03591"/>
    <property type="gene ID" value="WBGene00004397"/>
    <property type="gene designation" value="rol-6"/>
</dbReference>
<dbReference type="eggNOG" id="KOG3544">
    <property type="taxonomic scope" value="Eukaryota"/>
</dbReference>
<dbReference type="GeneTree" id="ENSGT00940000174005"/>
<dbReference type="HOGENOM" id="CLU_001074_4_4_1"/>
<dbReference type="InParanoid" id="P20784"/>
<dbReference type="OMA" id="CPGREGD"/>
<dbReference type="OrthoDB" id="6380629at2759"/>
<dbReference type="PhylomeDB" id="P20784"/>
<dbReference type="PRO" id="PR:P20784"/>
<dbReference type="Proteomes" id="UP000001940">
    <property type="component" value="Chromosome II"/>
</dbReference>
<dbReference type="Bgee" id="WBGene00004397">
    <property type="expression patterns" value="Expressed in pharyngeal muscle cell (C elegans) and 2 other cell types or tissues"/>
</dbReference>
<dbReference type="GO" id="GO:0005581">
    <property type="term" value="C:collagen trimer"/>
    <property type="evidence" value="ECO:0007669"/>
    <property type="project" value="UniProtKB-KW"/>
</dbReference>
<dbReference type="GO" id="GO:0060102">
    <property type="term" value="C:cuticular extracellular matrix"/>
    <property type="evidence" value="ECO:0000314"/>
    <property type="project" value="WormBase"/>
</dbReference>
<dbReference type="GO" id="GO:0042329">
    <property type="term" value="F:structural constituent of collagen and cuticulin-based cuticle"/>
    <property type="evidence" value="ECO:0000314"/>
    <property type="project" value="WormBase"/>
</dbReference>
<dbReference type="GO" id="GO:0042338">
    <property type="term" value="P:cuticle development involved in collagen and cuticulin-based cuticle molting cycle"/>
    <property type="evidence" value="ECO:0000315"/>
    <property type="project" value="WormBase"/>
</dbReference>
<dbReference type="InterPro" id="IPR002486">
    <property type="entry name" value="Col_cuticle_N"/>
</dbReference>
<dbReference type="InterPro" id="IPR008160">
    <property type="entry name" value="Collagen"/>
</dbReference>
<dbReference type="PANTHER" id="PTHR24637">
    <property type="entry name" value="COLLAGEN"/>
    <property type="match status" value="1"/>
</dbReference>
<dbReference type="PANTHER" id="PTHR24637:SF393">
    <property type="entry name" value="CUTICLE COLLAGEN ROL-6"/>
    <property type="match status" value="1"/>
</dbReference>
<dbReference type="Pfam" id="PF01484">
    <property type="entry name" value="Col_cuticle_N"/>
    <property type="match status" value="1"/>
</dbReference>
<dbReference type="Pfam" id="PF01391">
    <property type="entry name" value="Collagen"/>
    <property type="match status" value="1"/>
</dbReference>
<dbReference type="SMART" id="SM01088">
    <property type="entry name" value="Col_cuticle_N"/>
    <property type="match status" value="1"/>
</dbReference>
<organism>
    <name type="scientific">Caenorhabditis elegans</name>
    <dbReference type="NCBI Taxonomy" id="6239"/>
    <lineage>
        <taxon>Eukaryota</taxon>
        <taxon>Metazoa</taxon>
        <taxon>Ecdysozoa</taxon>
        <taxon>Nematoda</taxon>
        <taxon>Chromadorea</taxon>
        <taxon>Rhabditida</taxon>
        <taxon>Rhabditina</taxon>
        <taxon>Rhabditomorpha</taxon>
        <taxon>Rhabditoidea</taxon>
        <taxon>Rhabditidae</taxon>
        <taxon>Peloderinae</taxon>
        <taxon>Caenorhabditis</taxon>
    </lineage>
</organism>
<sequence length="348" mass="34761">MTLTTATSGAIVFSGATLLVSLFAAASLYSQVSNIWNELDAEIANFRSLTEDMWVDMVKLGAGTASNRVRRQQYGGYGATGVQPPAPTPNPYGGYGASQPAPPEKFPDGIPNGGNQPKFPGGGFPDGPFPNGGGPRGGNQCQCTVENSCPPGPAGPEGEEGPDGHDGQDGVPGFDGKDAEDVQNTPPTGCFTCPQGPLGPQGPNGAPGLRGMRGARGQPGRPGRDGNPGMPGDCGPPGAPGSDGKPGSPGGKGDDGERPLGRPGPRGPPGEAGPEGPQGPTGRDAYPGQSGPQGEPGLQGYGGAAGEDGPEGPPGAPGLPGKDAEYCKCPGREGDAGRSARRHRKFQL</sequence>
<comment type="function">
    <text evidence="2 3 5">Nematode cuticles are composed largely of collagen-like proteins (Probable). The cuticle functions both as an exoskeleton and as a barrier to protect the worm from its environment (Probable). May play a role in cuticle remodeling in response to the environment (PubMed:32229533). Involved in body morphogenesis (PubMed:21094156).</text>
</comment>
<comment type="subunit">
    <text>Collagen polypeptide chains are complexed within the cuticle by disulfide bonds and other types of covalent cross-links.</text>
</comment>
<comment type="tissue specificity">
    <text evidence="2">Localizes in stripes along the alae.</text>
</comment>
<comment type="similarity">
    <text evidence="4">Belongs to the cuticular collagen family.</text>
</comment>
<feature type="chain" id="PRO_0000127595" description="Cuticle collagen rol-6">
    <location>
        <begin position="1"/>
        <end position="348"/>
    </location>
</feature>
<feature type="region of interest" description="Disordered" evidence="1">
    <location>
        <begin position="76"/>
        <end position="348"/>
    </location>
</feature>
<feature type="region of interest" description="Triple-helical region">
    <location>
        <begin position="152"/>
        <end position="178"/>
    </location>
</feature>
<feature type="region of interest" description="Triple-helical region">
    <location>
        <begin position="196"/>
        <end position="258"/>
    </location>
</feature>
<feature type="region of interest" description="Triple-helical region">
    <location>
        <begin position="261"/>
        <end position="284"/>
    </location>
</feature>
<feature type="region of interest" description="Triple-helical region">
    <location>
        <begin position="288"/>
        <end position="323"/>
    </location>
</feature>
<feature type="compositionally biased region" description="Gly residues" evidence="1">
    <location>
        <begin position="120"/>
        <end position="137"/>
    </location>
</feature>
<feature type="compositionally biased region" description="Low complexity" evidence="1">
    <location>
        <begin position="194"/>
        <end position="231"/>
    </location>
</feature>
<feature type="compositionally biased region" description="Gly residues" evidence="1">
    <location>
        <begin position="297"/>
        <end position="306"/>
    </location>
</feature>
<feature type="compositionally biased region" description="Basic and acidic residues" evidence="1">
    <location>
        <begin position="322"/>
        <end position="338"/>
    </location>
</feature>
<feature type="compositionally biased region" description="Basic residues" evidence="1">
    <location>
        <begin position="339"/>
        <end position="348"/>
    </location>
</feature>
<feature type="mutagenesis site" description="In su1006; body is twisted into a right-handed helix (roller phenotype). Roller phenotype is sensitive to changes in diet leading to metabolic disruption, such as reduction in vitamin B12 intake." evidence="2 3">
    <original>R</original>
    <variation>C</variation>
    <location>
        <position position="71"/>
    </location>
</feature>